<accession>Q9JZQ8</accession>
<proteinExistence type="inferred from homology"/>
<sequence>MKTAQELRAGNVFMVGNDPMVVQKTEYIKGGRSSAKVSMKLKNLLTGAASETIYKADDKFDVVILSRKNCTYSYFADPMYVFMDEEFNQYEIEADNIGDALKFIVDGMEDQCEVTFYEGNPISVELPTIIVREVEYTEPAVKGDTSGKVMKTARLVGGTEIQVMSYIENGDKVEIDTRTGEFRKRA</sequence>
<evidence type="ECO:0000255" key="1">
    <source>
        <dbReference type="HAMAP-Rule" id="MF_00141"/>
    </source>
</evidence>
<name>EFP_NEIMB</name>
<feature type="chain" id="PRO_0000094295" description="Elongation factor P">
    <location>
        <begin position="1"/>
        <end position="186"/>
    </location>
</feature>
<keyword id="KW-0963">Cytoplasm</keyword>
<keyword id="KW-0251">Elongation factor</keyword>
<keyword id="KW-0648">Protein biosynthesis</keyword>
<keyword id="KW-1185">Reference proteome</keyword>
<comment type="function">
    <text evidence="1">Involved in peptide bond synthesis. Stimulates efficient translation and peptide-bond synthesis on native or reconstituted 70S ribosomes in vitro. Probably functions indirectly by altering the affinity of the ribosome for aminoacyl-tRNA, thus increasing their reactivity as acceptors for peptidyl transferase.</text>
</comment>
<comment type="pathway">
    <text evidence="1">Protein biosynthesis; polypeptide chain elongation.</text>
</comment>
<comment type="subcellular location">
    <subcellularLocation>
        <location evidence="1">Cytoplasm</location>
    </subcellularLocation>
</comment>
<comment type="similarity">
    <text evidence="1">Belongs to the elongation factor P family.</text>
</comment>
<dbReference type="EMBL" id="AE002098">
    <property type="protein sequence ID" value="AAF41343.1"/>
    <property type="molecule type" value="Genomic_DNA"/>
</dbReference>
<dbReference type="PIR" id="F81139">
    <property type="entry name" value="F81139"/>
</dbReference>
<dbReference type="RefSeq" id="NP_273975.1">
    <property type="nucleotide sequence ID" value="NC_003112.2"/>
</dbReference>
<dbReference type="RefSeq" id="WP_002219406.1">
    <property type="nucleotide sequence ID" value="NC_003112.2"/>
</dbReference>
<dbReference type="SMR" id="Q9JZQ8"/>
<dbReference type="FunCoup" id="Q9JZQ8">
    <property type="interactions" value="516"/>
</dbReference>
<dbReference type="STRING" id="122586.NMB0937"/>
<dbReference type="PaxDb" id="122586-NMB0937"/>
<dbReference type="GeneID" id="86928945"/>
<dbReference type="KEGG" id="nme:NMB0937"/>
<dbReference type="PATRIC" id="fig|122586.8.peg.1188"/>
<dbReference type="HOGENOM" id="CLU_074944_2_1_4"/>
<dbReference type="InParanoid" id="Q9JZQ8"/>
<dbReference type="OrthoDB" id="9801844at2"/>
<dbReference type="UniPathway" id="UPA00345"/>
<dbReference type="PRO" id="PR:Q9JZQ8"/>
<dbReference type="Proteomes" id="UP000000425">
    <property type="component" value="Chromosome"/>
</dbReference>
<dbReference type="GO" id="GO:0005737">
    <property type="term" value="C:cytoplasm"/>
    <property type="evidence" value="ECO:0000318"/>
    <property type="project" value="GO_Central"/>
</dbReference>
<dbReference type="GO" id="GO:0003746">
    <property type="term" value="F:translation elongation factor activity"/>
    <property type="evidence" value="ECO:0000318"/>
    <property type="project" value="GO_Central"/>
</dbReference>
<dbReference type="GO" id="GO:0043043">
    <property type="term" value="P:peptide biosynthetic process"/>
    <property type="evidence" value="ECO:0007669"/>
    <property type="project" value="InterPro"/>
</dbReference>
<dbReference type="CDD" id="cd04470">
    <property type="entry name" value="S1_EF-P_repeat_1"/>
    <property type="match status" value="1"/>
</dbReference>
<dbReference type="CDD" id="cd05794">
    <property type="entry name" value="S1_EF-P_repeat_2"/>
    <property type="match status" value="1"/>
</dbReference>
<dbReference type="FunFam" id="2.30.30.30:FF:000003">
    <property type="entry name" value="Elongation factor P"/>
    <property type="match status" value="1"/>
</dbReference>
<dbReference type="FunFam" id="2.40.50.140:FF:000004">
    <property type="entry name" value="Elongation factor P"/>
    <property type="match status" value="1"/>
</dbReference>
<dbReference type="FunFam" id="2.40.50.140:FF:000009">
    <property type="entry name" value="Elongation factor P"/>
    <property type="match status" value="1"/>
</dbReference>
<dbReference type="Gene3D" id="2.30.30.30">
    <property type="match status" value="1"/>
</dbReference>
<dbReference type="Gene3D" id="2.40.50.140">
    <property type="entry name" value="Nucleic acid-binding proteins"/>
    <property type="match status" value="2"/>
</dbReference>
<dbReference type="HAMAP" id="MF_00141">
    <property type="entry name" value="EF_P"/>
    <property type="match status" value="1"/>
</dbReference>
<dbReference type="InterPro" id="IPR015365">
    <property type="entry name" value="Elong-fact-P_C"/>
</dbReference>
<dbReference type="InterPro" id="IPR012340">
    <property type="entry name" value="NA-bd_OB-fold"/>
</dbReference>
<dbReference type="InterPro" id="IPR014722">
    <property type="entry name" value="Rib_uL2_dom2"/>
</dbReference>
<dbReference type="InterPro" id="IPR020599">
    <property type="entry name" value="Transl_elong_fac_P/YeiP"/>
</dbReference>
<dbReference type="InterPro" id="IPR013185">
    <property type="entry name" value="Transl_elong_KOW-like"/>
</dbReference>
<dbReference type="InterPro" id="IPR001059">
    <property type="entry name" value="Transl_elong_P/YeiP_cen"/>
</dbReference>
<dbReference type="InterPro" id="IPR011768">
    <property type="entry name" value="Transl_elongation_fac_P"/>
</dbReference>
<dbReference type="InterPro" id="IPR008991">
    <property type="entry name" value="Translation_prot_SH3-like_sf"/>
</dbReference>
<dbReference type="NCBIfam" id="TIGR00038">
    <property type="entry name" value="efp"/>
    <property type="match status" value="1"/>
</dbReference>
<dbReference type="NCBIfam" id="NF001810">
    <property type="entry name" value="PRK00529.1"/>
    <property type="match status" value="1"/>
</dbReference>
<dbReference type="PANTHER" id="PTHR30053">
    <property type="entry name" value="ELONGATION FACTOR P"/>
    <property type="match status" value="1"/>
</dbReference>
<dbReference type="PANTHER" id="PTHR30053:SF12">
    <property type="entry name" value="ELONGATION FACTOR P (EF-P) FAMILY PROTEIN"/>
    <property type="match status" value="1"/>
</dbReference>
<dbReference type="Pfam" id="PF01132">
    <property type="entry name" value="EFP"/>
    <property type="match status" value="1"/>
</dbReference>
<dbReference type="Pfam" id="PF08207">
    <property type="entry name" value="EFP_N"/>
    <property type="match status" value="1"/>
</dbReference>
<dbReference type="Pfam" id="PF09285">
    <property type="entry name" value="Elong-fact-P_C"/>
    <property type="match status" value="1"/>
</dbReference>
<dbReference type="PIRSF" id="PIRSF005901">
    <property type="entry name" value="EF-P"/>
    <property type="match status" value="1"/>
</dbReference>
<dbReference type="SMART" id="SM01185">
    <property type="entry name" value="EFP"/>
    <property type="match status" value="1"/>
</dbReference>
<dbReference type="SMART" id="SM00841">
    <property type="entry name" value="Elong-fact-P_C"/>
    <property type="match status" value="1"/>
</dbReference>
<dbReference type="SUPFAM" id="SSF50249">
    <property type="entry name" value="Nucleic acid-binding proteins"/>
    <property type="match status" value="2"/>
</dbReference>
<dbReference type="SUPFAM" id="SSF50104">
    <property type="entry name" value="Translation proteins SH3-like domain"/>
    <property type="match status" value="1"/>
</dbReference>
<reference key="1">
    <citation type="journal article" date="2000" name="Science">
        <title>Complete genome sequence of Neisseria meningitidis serogroup B strain MC58.</title>
        <authorList>
            <person name="Tettelin H."/>
            <person name="Saunders N.J."/>
            <person name="Heidelberg J.F."/>
            <person name="Jeffries A.C."/>
            <person name="Nelson K.E."/>
            <person name="Eisen J.A."/>
            <person name="Ketchum K.A."/>
            <person name="Hood D.W."/>
            <person name="Peden J.F."/>
            <person name="Dodson R.J."/>
            <person name="Nelson W.C."/>
            <person name="Gwinn M.L."/>
            <person name="DeBoy R.T."/>
            <person name="Peterson J.D."/>
            <person name="Hickey E.K."/>
            <person name="Haft D.H."/>
            <person name="Salzberg S.L."/>
            <person name="White O."/>
            <person name="Fleischmann R.D."/>
            <person name="Dougherty B.A."/>
            <person name="Mason T.M."/>
            <person name="Ciecko A."/>
            <person name="Parksey D.S."/>
            <person name="Blair E."/>
            <person name="Cittone H."/>
            <person name="Clark E.B."/>
            <person name="Cotton M.D."/>
            <person name="Utterback T.R."/>
            <person name="Khouri H.M."/>
            <person name="Qin H."/>
            <person name="Vamathevan J.J."/>
            <person name="Gill J."/>
            <person name="Scarlato V."/>
            <person name="Masignani V."/>
            <person name="Pizza M."/>
            <person name="Grandi G."/>
            <person name="Sun L."/>
            <person name="Smith H.O."/>
            <person name="Fraser C.M."/>
            <person name="Moxon E.R."/>
            <person name="Rappuoli R."/>
            <person name="Venter J.C."/>
        </authorList>
    </citation>
    <scope>NUCLEOTIDE SEQUENCE [LARGE SCALE GENOMIC DNA]</scope>
    <source>
        <strain>ATCC BAA-335 / MC58</strain>
    </source>
</reference>
<gene>
    <name evidence="1" type="primary">efp</name>
    <name type="ordered locus">NMB0937</name>
</gene>
<protein>
    <recommendedName>
        <fullName evidence="1">Elongation factor P</fullName>
        <shortName evidence="1">EF-P</shortName>
    </recommendedName>
</protein>
<organism>
    <name type="scientific">Neisseria meningitidis serogroup B (strain ATCC BAA-335 / MC58)</name>
    <dbReference type="NCBI Taxonomy" id="122586"/>
    <lineage>
        <taxon>Bacteria</taxon>
        <taxon>Pseudomonadati</taxon>
        <taxon>Pseudomonadota</taxon>
        <taxon>Betaproteobacteria</taxon>
        <taxon>Neisseriales</taxon>
        <taxon>Neisseriaceae</taxon>
        <taxon>Neisseria</taxon>
    </lineage>
</organism>